<evidence type="ECO:0000255" key="1">
    <source>
        <dbReference type="HAMAP-Rule" id="MF_01147"/>
    </source>
</evidence>
<organism>
    <name type="scientific">Methylococcus capsulatus (strain ATCC 33009 / NCIMB 11132 / Bath)</name>
    <dbReference type="NCBI Taxonomy" id="243233"/>
    <lineage>
        <taxon>Bacteria</taxon>
        <taxon>Pseudomonadati</taxon>
        <taxon>Pseudomonadota</taxon>
        <taxon>Gammaproteobacteria</taxon>
        <taxon>Methylococcales</taxon>
        <taxon>Methylococcaceae</taxon>
        <taxon>Methylococcus</taxon>
    </lineage>
</organism>
<sequence>MLTYPAIDPVAVSFGPLKVHWYGLMYVIGIAATWILARRRVQRSANPLFTPAQVEDLVFYAAIGVVVGGRLGYALFYNFSGFLHDPAMLFRIWEGGMAFHGGLIGVLIAMYAYGRSQGIRFFDVADFLAPYVPIGLLAGRIGNFINGELWGKPSDLPWAMIFPHAGDVPRHPSQLYEAFLEGLVLLIILQWFSRRSPPRMAVSGLFLLGYGVFRFAVEFVRLPDVQLGYLAFGWLTMGQILCLPMILFGIVLLAAAYARRSA</sequence>
<name>LGT_METCA</name>
<comment type="function">
    <text evidence="1">Catalyzes the transfer of the diacylglyceryl group from phosphatidylglycerol to the sulfhydryl group of the N-terminal cysteine of a prolipoprotein, the first step in the formation of mature lipoproteins.</text>
</comment>
<comment type="catalytic activity">
    <reaction evidence="1">
        <text>L-cysteinyl-[prolipoprotein] + a 1,2-diacyl-sn-glycero-3-phospho-(1'-sn-glycerol) = an S-1,2-diacyl-sn-glyceryl-L-cysteinyl-[prolipoprotein] + sn-glycerol 1-phosphate + H(+)</text>
        <dbReference type="Rhea" id="RHEA:56712"/>
        <dbReference type="Rhea" id="RHEA-COMP:14679"/>
        <dbReference type="Rhea" id="RHEA-COMP:14680"/>
        <dbReference type="ChEBI" id="CHEBI:15378"/>
        <dbReference type="ChEBI" id="CHEBI:29950"/>
        <dbReference type="ChEBI" id="CHEBI:57685"/>
        <dbReference type="ChEBI" id="CHEBI:64716"/>
        <dbReference type="ChEBI" id="CHEBI:140658"/>
        <dbReference type="EC" id="2.5.1.145"/>
    </reaction>
</comment>
<comment type="pathway">
    <text evidence="1">Protein modification; lipoprotein biosynthesis (diacylglyceryl transfer).</text>
</comment>
<comment type="subcellular location">
    <subcellularLocation>
        <location evidence="1">Cell inner membrane</location>
        <topology evidence="1">Multi-pass membrane protein</topology>
    </subcellularLocation>
</comment>
<comment type="similarity">
    <text evidence="1">Belongs to the Lgt family.</text>
</comment>
<keyword id="KW-0997">Cell inner membrane</keyword>
<keyword id="KW-1003">Cell membrane</keyword>
<keyword id="KW-0472">Membrane</keyword>
<keyword id="KW-1185">Reference proteome</keyword>
<keyword id="KW-0808">Transferase</keyword>
<keyword id="KW-0812">Transmembrane</keyword>
<keyword id="KW-1133">Transmembrane helix</keyword>
<proteinExistence type="inferred from homology"/>
<accession>Q603S3</accession>
<reference key="1">
    <citation type="journal article" date="2004" name="PLoS Biol.">
        <title>Genomic insights into methanotrophy: the complete genome sequence of Methylococcus capsulatus (Bath).</title>
        <authorList>
            <person name="Ward N.L."/>
            <person name="Larsen O."/>
            <person name="Sakwa J."/>
            <person name="Bruseth L."/>
            <person name="Khouri H.M."/>
            <person name="Durkin A.S."/>
            <person name="Dimitrov G."/>
            <person name="Jiang L."/>
            <person name="Scanlan D."/>
            <person name="Kang K.H."/>
            <person name="Lewis M.R."/>
            <person name="Nelson K.E."/>
            <person name="Methe B.A."/>
            <person name="Wu M."/>
            <person name="Heidelberg J.F."/>
            <person name="Paulsen I.T."/>
            <person name="Fouts D.E."/>
            <person name="Ravel J."/>
            <person name="Tettelin H."/>
            <person name="Ren Q."/>
            <person name="Read T.D."/>
            <person name="DeBoy R.T."/>
            <person name="Seshadri R."/>
            <person name="Salzberg S.L."/>
            <person name="Jensen H.B."/>
            <person name="Birkeland N.K."/>
            <person name="Nelson W.C."/>
            <person name="Dodson R.J."/>
            <person name="Grindhaug S.H."/>
            <person name="Holt I.E."/>
            <person name="Eidhammer I."/>
            <person name="Jonasen I."/>
            <person name="Vanaken S."/>
            <person name="Utterback T.R."/>
            <person name="Feldblyum T.V."/>
            <person name="Fraser C.M."/>
            <person name="Lillehaug J.R."/>
            <person name="Eisen J.A."/>
        </authorList>
    </citation>
    <scope>NUCLEOTIDE SEQUENCE [LARGE SCALE GENOMIC DNA]</scope>
    <source>
        <strain>ATCC 33009 / NCIMB 11132 / Bath</strain>
    </source>
</reference>
<feature type="chain" id="PRO_0000172630" description="Phosphatidylglycerol--prolipoprotein diacylglyceryl transferase">
    <location>
        <begin position="1"/>
        <end position="262"/>
    </location>
</feature>
<feature type="transmembrane region" description="Helical" evidence="1">
    <location>
        <begin position="17"/>
        <end position="37"/>
    </location>
</feature>
<feature type="transmembrane region" description="Helical" evidence="1">
    <location>
        <begin position="57"/>
        <end position="77"/>
    </location>
</feature>
<feature type="transmembrane region" description="Helical" evidence="1">
    <location>
        <begin position="92"/>
        <end position="112"/>
    </location>
</feature>
<feature type="transmembrane region" description="Helical" evidence="1">
    <location>
        <begin position="200"/>
        <end position="220"/>
    </location>
</feature>
<feature type="transmembrane region" description="Helical" evidence="1">
    <location>
        <begin position="234"/>
        <end position="254"/>
    </location>
</feature>
<feature type="binding site" evidence="1">
    <location>
        <position position="140"/>
    </location>
    <ligand>
        <name>a 1,2-diacyl-sn-glycero-3-phospho-(1'-sn-glycerol)</name>
        <dbReference type="ChEBI" id="CHEBI:64716"/>
    </ligand>
</feature>
<protein>
    <recommendedName>
        <fullName evidence="1">Phosphatidylglycerol--prolipoprotein diacylglyceryl transferase</fullName>
        <ecNumber evidence="1">2.5.1.145</ecNumber>
    </recommendedName>
</protein>
<dbReference type="EC" id="2.5.1.145" evidence="1"/>
<dbReference type="EMBL" id="AE017282">
    <property type="protein sequence ID" value="AAU91199.1"/>
    <property type="molecule type" value="Genomic_DNA"/>
</dbReference>
<dbReference type="RefSeq" id="WP_010961933.1">
    <property type="nucleotide sequence ID" value="NC_002977.6"/>
</dbReference>
<dbReference type="SMR" id="Q603S3"/>
<dbReference type="STRING" id="243233.MCA2727"/>
<dbReference type="GeneID" id="88224907"/>
<dbReference type="KEGG" id="mca:MCA2727"/>
<dbReference type="eggNOG" id="COG0682">
    <property type="taxonomic scope" value="Bacteria"/>
</dbReference>
<dbReference type="HOGENOM" id="CLU_013386_1_0_6"/>
<dbReference type="UniPathway" id="UPA00664"/>
<dbReference type="Proteomes" id="UP000006821">
    <property type="component" value="Chromosome"/>
</dbReference>
<dbReference type="GO" id="GO:0005886">
    <property type="term" value="C:plasma membrane"/>
    <property type="evidence" value="ECO:0007669"/>
    <property type="project" value="UniProtKB-SubCell"/>
</dbReference>
<dbReference type="GO" id="GO:0008961">
    <property type="term" value="F:phosphatidylglycerol-prolipoprotein diacylglyceryl transferase activity"/>
    <property type="evidence" value="ECO:0007669"/>
    <property type="project" value="UniProtKB-UniRule"/>
</dbReference>
<dbReference type="GO" id="GO:0042158">
    <property type="term" value="P:lipoprotein biosynthetic process"/>
    <property type="evidence" value="ECO:0007669"/>
    <property type="project" value="UniProtKB-UniRule"/>
</dbReference>
<dbReference type="HAMAP" id="MF_01147">
    <property type="entry name" value="Lgt"/>
    <property type="match status" value="1"/>
</dbReference>
<dbReference type="InterPro" id="IPR001640">
    <property type="entry name" value="Lgt"/>
</dbReference>
<dbReference type="NCBIfam" id="TIGR00544">
    <property type="entry name" value="lgt"/>
    <property type="match status" value="1"/>
</dbReference>
<dbReference type="PANTHER" id="PTHR30589:SF0">
    <property type="entry name" value="PHOSPHATIDYLGLYCEROL--PROLIPOPROTEIN DIACYLGLYCERYL TRANSFERASE"/>
    <property type="match status" value="1"/>
</dbReference>
<dbReference type="PANTHER" id="PTHR30589">
    <property type="entry name" value="PROLIPOPROTEIN DIACYLGLYCERYL TRANSFERASE"/>
    <property type="match status" value="1"/>
</dbReference>
<dbReference type="Pfam" id="PF01790">
    <property type="entry name" value="LGT"/>
    <property type="match status" value="1"/>
</dbReference>
<dbReference type="PROSITE" id="PS01311">
    <property type="entry name" value="LGT"/>
    <property type="match status" value="1"/>
</dbReference>
<gene>
    <name evidence="1" type="primary">lgt</name>
    <name type="ordered locus">MCA2727</name>
</gene>